<protein>
    <recommendedName>
        <fullName evidence="1">Tyrosine recombinase XerC</fullName>
    </recommendedName>
</protein>
<dbReference type="EMBL" id="CP000255">
    <property type="protein sequence ID" value="ABD22864.1"/>
    <property type="molecule type" value="Genomic_DNA"/>
</dbReference>
<dbReference type="RefSeq" id="WP_001015597.1">
    <property type="nucleotide sequence ID" value="NZ_CP027476.1"/>
</dbReference>
<dbReference type="SMR" id="Q2FHI6"/>
<dbReference type="KEGG" id="saa:SAUSA300_1145"/>
<dbReference type="HOGENOM" id="CLU_027562_9_0_9"/>
<dbReference type="OMA" id="AMMELMY"/>
<dbReference type="Proteomes" id="UP000001939">
    <property type="component" value="Chromosome"/>
</dbReference>
<dbReference type="GO" id="GO:0005737">
    <property type="term" value="C:cytoplasm"/>
    <property type="evidence" value="ECO:0007669"/>
    <property type="project" value="UniProtKB-SubCell"/>
</dbReference>
<dbReference type="GO" id="GO:0003677">
    <property type="term" value="F:DNA binding"/>
    <property type="evidence" value="ECO:0007669"/>
    <property type="project" value="UniProtKB-KW"/>
</dbReference>
<dbReference type="GO" id="GO:0009037">
    <property type="term" value="F:tyrosine-based site-specific recombinase activity"/>
    <property type="evidence" value="ECO:0007669"/>
    <property type="project" value="UniProtKB-UniRule"/>
</dbReference>
<dbReference type="GO" id="GO:0051301">
    <property type="term" value="P:cell division"/>
    <property type="evidence" value="ECO:0007669"/>
    <property type="project" value="UniProtKB-KW"/>
</dbReference>
<dbReference type="GO" id="GO:0007059">
    <property type="term" value="P:chromosome segregation"/>
    <property type="evidence" value="ECO:0007669"/>
    <property type="project" value="UniProtKB-UniRule"/>
</dbReference>
<dbReference type="GO" id="GO:0006313">
    <property type="term" value="P:DNA transposition"/>
    <property type="evidence" value="ECO:0007669"/>
    <property type="project" value="UniProtKB-UniRule"/>
</dbReference>
<dbReference type="CDD" id="cd00798">
    <property type="entry name" value="INT_XerDC_C"/>
    <property type="match status" value="1"/>
</dbReference>
<dbReference type="Gene3D" id="1.10.150.130">
    <property type="match status" value="1"/>
</dbReference>
<dbReference type="Gene3D" id="1.10.443.10">
    <property type="entry name" value="Intergrase catalytic core"/>
    <property type="match status" value="1"/>
</dbReference>
<dbReference type="HAMAP" id="MF_01808">
    <property type="entry name" value="Recomb_XerC_XerD"/>
    <property type="match status" value="1"/>
</dbReference>
<dbReference type="InterPro" id="IPR044068">
    <property type="entry name" value="CB"/>
</dbReference>
<dbReference type="InterPro" id="IPR011010">
    <property type="entry name" value="DNA_brk_join_enz"/>
</dbReference>
<dbReference type="InterPro" id="IPR013762">
    <property type="entry name" value="Integrase-like_cat_sf"/>
</dbReference>
<dbReference type="InterPro" id="IPR002104">
    <property type="entry name" value="Integrase_catalytic"/>
</dbReference>
<dbReference type="InterPro" id="IPR010998">
    <property type="entry name" value="Integrase_recombinase_N"/>
</dbReference>
<dbReference type="InterPro" id="IPR004107">
    <property type="entry name" value="Integrase_SAM-like_N"/>
</dbReference>
<dbReference type="InterPro" id="IPR011931">
    <property type="entry name" value="Recomb_XerC"/>
</dbReference>
<dbReference type="InterPro" id="IPR023009">
    <property type="entry name" value="Tyrosine_recombinase_XerC/XerD"/>
</dbReference>
<dbReference type="InterPro" id="IPR050090">
    <property type="entry name" value="Tyrosine_recombinase_XerCD"/>
</dbReference>
<dbReference type="NCBIfam" id="NF001399">
    <property type="entry name" value="PRK00283.1"/>
    <property type="match status" value="1"/>
</dbReference>
<dbReference type="NCBIfam" id="NF040815">
    <property type="entry name" value="recomb_XerA_Arch"/>
    <property type="match status" value="1"/>
</dbReference>
<dbReference type="NCBIfam" id="TIGR02224">
    <property type="entry name" value="recomb_XerC"/>
    <property type="match status" value="1"/>
</dbReference>
<dbReference type="PANTHER" id="PTHR30349">
    <property type="entry name" value="PHAGE INTEGRASE-RELATED"/>
    <property type="match status" value="1"/>
</dbReference>
<dbReference type="PANTHER" id="PTHR30349:SF77">
    <property type="entry name" value="TYROSINE RECOMBINASE XERC"/>
    <property type="match status" value="1"/>
</dbReference>
<dbReference type="Pfam" id="PF02899">
    <property type="entry name" value="Phage_int_SAM_1"/>
    <property type="match status" value="1"/>
</dbReference>
<dbReference type="Pfam" id="PF00589">
    <property type="entry name" value="Phage_integrase"/>
    <property type="match status" value="1"/>
</dbReference>
<dbReference type="SUPFAM" id="SSF56349">
    <property type="entry name" value="DNA breaking-rejoining enzymes"/>
    <property type="match status" value="1"/>
</dbReference>
<dbReference type="PROSITE" id="PS51900">
    <property type="entry name" value="CB"/>
    <property type="match status" value="1"/>
</dbReference>
<dbReference type="PROSITE" id="PS51898">
    <property type="entry name" value="TYR_RECOMBINASE"/>
    <property type="match status" value="1"/>
</dbReference>
<keyword id="KW-0131">Cell cycle</keyword>
<keyword id="KW-0132">Cell division</keyword>
<keyword id="KW-0159">Chromosome partition</keyword>
<keyword id="KW-0963">Cytoplasm</keyword>
<keyword id="KW-0229">DNA integration</keyword>
<keyword id="KW-0233">DNA recombination</keyword>
<keyword id="KW-0238">DNA-binding</keyword>
<gene>
    <name evidence="1" type="primary">xerC</name>
    <name type="ordered locus">SAUSA300_1145</name>
</gene>
<evidence type="ECO:0000255" key="1">
    <source>
        <dbReference type="HAMAP-Rule" id="MF_01808"/>
    </source>
</evidence>
<evidence type="ECO:0000255" key="2">
    <source>
        <dbReference type="PROSITE-ProRule" id="PRU01246"/>
    </source>
</evidence>
<evidence type="ECO:0000255" key="3">
    <source>
        <dbReference type="PROSITE-ProRule" id="PRU01248"/>
    </source>
</evidence>
<reference key="1">
    <citation type="journal article" date="2006" name="Lancet">
        <title>Complete genome sequence of USA300, an epidemic clone of community-acquired meticillin-resistant Staphylococcus aureus.</title>
        <authorList>
            <person name="Diep B.A."/>
            <person name="Gill S.R."/>
            <person name="Chang R.F."/>
            <person name="Phan T.H."/>
            <person name="Chen J.H."/>
            <person name="Davidson M.G."/>
            <person name="Lin F."/>
            <person name="Lin J."/>
            <person name="Carleton H.A."/>
            <person name="Mongodin E.F."/>
            <person name="Sensabaugh G.F."/>
            <person name="Perdreau-Remington F."/>
        </authorList>
    </citation>
    <scope>NUCLEOTIDE SEQUENCE [LARGE SCALE GENOMIC DNA]</scope>
    <source>
        <strain>USA300</strain>
    </source>
</reference>
<proteinExistence type="inferred from homology"/>
<name>XERC_STAA3</name>
<feature type="chain" id="PRO_1000070044" description="Tyrosine recombinase XerC">
    <location>
        <begin position="1"/>
        <end position="298"/>
    </location>
</feature>
<feature type="domain" description="Core-binding (CB)" evidence="3">
    <location>
        <begin position="1"/>
        <end position="84"/>
    </location>
</feature>
<feature type="domain" description="Tyr recombinase" evidence="2">
    <location>
        <begin position="105"/>
        <end position="286"/>
    </location>
</feature>
<feature type="active site" evidence="1">
    <location>
        <position position="145"/>
    </location>
</feature>
<feature type="active site" evidence="1">
    <location>
        <position position="169"/>
    </location>
</feature>
<feature type="active site" evidence="1">
    <location>
        <position position="238"/>
    </location>
</feature>
<feature type="active site" evidence="1">
    <location>
        <position position="241"/>
    </location>
</feature>
<feature type="active site" evidence="1">
    <location>
        <position position="264"/>
    </location>
</feature>
<feature type="active site" description="O-(3'-phospho-DNA)-tyrosine intermediate" evidence="1">
    <location>
        <position position="273"/>
    </location>
</feature>
<sequence>MNHIQDAFLNTLKVERNFSEHTLKSYQDDLIQFNQFLEQEHLELNTFEYRDARNYLSYLYSNHLKRTSVSRKISTLRTFYEYWMTLDENIINPFVQLVHPKKEKYLPQFFYEEEMEALFKTVEEDTSKNLRDRVILELLYATGIRVSELVNIKKQDIDFYANGVTVLGKGSKERFVPFGAYCRQSIENYLEHFKPIQSCNHDFLIVNMKGEAITERGVRYVLNDIVKRTAGVSEIHPHKLRHTFATHLLNQGADLRTVQSLLGHVNLSTTGKYTHVSNQQLRKVYLNAHPRAKKENET</sequence>
<organism>
    <name type="scientific">Staphylococcus aureus (strain USA300)</name>
    <dbReference type="NCBI Taxonomy" id="367830"/>
    <lineage>
        <taxon>Bacteria</taxon>
        <taxon>Bacillati</taxon>
        <taxon>Bacillota</taxon>
        <taxon>Bacilli</taxon>
        <taxon>Bacillales</taxon>
        <taxon>Staphylococcaceae</taxon>
        <taxon>Staphylococcus</taxon>
    </lineage>
</organism>
<comment type="function">
    <text evidence="1">Site-specific tyrosine recombinase, which acts by catalyzing the cutting and rejoining of the recombining DNA molecules. The XerC-XerD complex is essential to convert dimers of the bacterial chromosome into monomers to permit their segregation at cell division. It also contributes to the segregational stability of plasmids.</text>
</comment>
<comment type="subunit">
    <text evidence="1">Forms a cyclic heterotetrameric complex composed of two molecules of XerC and two molecules of XerD.</text>
</comment>
<comment type="subcellular location">
    <subcellularLocation>
        <location evidence="1">Cytoplasm</location>
    </subcellularLocation>
</comment>
<comment type="similarity">
    <text evidence="1">Belongs to the 'phage' integrase family. XerC subfamily.</text>
</comment>
<accession>Q2FHI6</accession>